<feature type="chain" id="PRO_0000210410" description="Uncharacterized protein MG074 homolog">
    <location>
        <begin position="1"/>
        <end position="135"/>
    </location>
</feature>
<dbReference type="EMBL" id="U00089">
    <property type="protein sequence ID" value="AAB96267.1"/>
    <property type="molecule type" value="Genomic_DNA"/>
</dbReference>
<dbReference type="PIR" id="S73945">
    <property type="entry name" value="S73945"/>
</dbReference>
<dbReference type="RefSeq" id="NP_109900.1">
    <property type="nucleotide sequence ID" value="NC_000912.1"/>
</dbReference>
<dbReference type="RefSeq" id="WP_010874569.1">
    <property type="nucleotide sequence ID" value="NZ_OU342337.1"/>
</dbReference>
<dbReference type="STRING" id="272634.MPN_212"/>
<dbReference type="EnsemblBacteria" id="AAB96267">
    <property type="protein sequence ID" value="AAB96267"/>
    <property type="gene ID" value="MPN_212"/>
</dbReference>
<dbReference type="KEGG" id="mpn:MPN_212"/>
<dbReference type="PATRIC" id="fig|272634.6.peg.231"/>
<dbReference type="HOGENOM" id="CLU_1862952_0_0_14"/>
<dbReference type="OrthoDB" id="9999175at2"/>
<dbReference type="BioCyc" id="MPNE272634:G1GJ3-343-MONOMER"/>
<dbReference type="Proteomes" id="UP000000808">
    <property type="component" value="Chromosome"/>
</dbReference>
<dbReference type="InterPro" id="IPR035339">
    <property type="entry name" value="DUF5426"/>
</dbReference>
<dbReference type="Pfam" id="PF17473">
    <property type="entry name" value="DUF5426"/>
    <property type="match status" value="1"/>
</dbReference>
<gene>
    <name type="ordered locus">MPN_212</name>
    <name type="ORF">G07_orf135</name>
    <name type="ORF">MP619</name>
</gene>
<name>Y212_MYCPN</name>
<protein>
    <recommendedName>
        <fullName>Uncharacterized protein MG074 homolog</fullName>
    </recommendedName>
</protein>
<accession>P0CJ80</accession>
<accession>P75557</accession>
<organism>
    <name type="scientific">Mycoplasma pneumoniae (strain ATCC 29342 / M129 / Subtype 1)</name>
    <name type="common">Mycoplasmoides pneumoniae</name>
    <dbReference type="NCBI Taxonomy" id="272634"/>
    <lineage>
        <taxon>Bacteria</taxon>
        <taxon>Bacillati</taxon>
        <taxon>Mycoplasmatota</taxon>
        <taxon>Mycoplasmoidales</taxon>
        <taxon>Mycoplasmoidaceae</taxon>
        <taxon>Mycoplasmoides</taxon>
    </lineage>
</organism>
<sequence>MRKLIKLNVIVFVLLYLGELFASLSFKLISCLKTRNQYSLNGYYALFVFVNIIQKMANSFQKLASSVVLFETEINEFLVLFTDTKNKREESEPVRQVSTTQEYHQVTLDQQHYFNHKLSDYFRLFKDKTFFFEII</sequence>
<proteinExistence type="predicted"/>
<keyword id="KW-1185">Reference proteome</keyword>
<reference key="1">
    <citation type="journal article" date="1996" name="Nucleic Acids Res.">
        <title>Complete sequence analysis of the genome of the bacterium Mycoplasma pneumoniae.</title>
        <authorList>
            <person name="Himmelreich R."/>
            <person name="Hilbert H."/>
            <person name="Plagens H."/>
            <person name="Pirkl E."/>
            <person name="Li B.-C."/>
            <person name="Herrmann R."/>
        </authorList>
    </citation>
    <scope>NUCLEOTIDE SEQUENCE [LARGE SCALE GENOMIC DNA]</scope>
    <source>
        <strain>ATCC 29342 / M129 / Subtype 1</strain>
    </source>
</reference>